<keyword id="KW-0067">ATP-binding</keyword>
<keyword id="KW-0520">NAD</keyword>
<keyword id="KW-0547">Nucleotide-binding</keyword>
<keyword id="KW-0548">Nucleotidyltransferase</keyword>
<keyword id="KW-0662">Pyridine nucleotide biosynthesis</keyword>
<keyword id="KW-0808">Transferase</keyword>
<name>NADD_STRP8</name>
<organism>
    <name type="scientific">Streptococcus pyogenes serotype M18 (strain MGAS8232)</name>
    <dbReference type="NCBI Taxonomy" id="186103"/>
    <lineage>
        <taxon>Bacteria</taxon>
        <taxon>Bacillati</taxon>
        <taxon>Bacillota</taxon>
        <taxon>Bacilli</taxon>
        <taxon>Lactobacillales</taxon>
        <taxon>Streptococcaceae</taxon>
        <taxon>Streptococcus</taxon>
    </lineage>
</organism>
<dbReference type="EC" id="2.7.7.18" evidence="1"/>
<dbReference type="EMBL" id="AE009949">
    <property type="protein sequence ID" value="AAL97065.1"/>
    <property type="molecule type" value="Genomic_DNA"/>
</dbReference>
<dbReference type="RefSeq" id="WP_011017338.1">
    <property type="nucleotide sequence ID" value="NC_003485.1"/>
</dbReference>
<dbReference type="SMR" id="Q8P2L2"/>
<dbReference type="KEGG" id="spm:spyM18_0304"/>
<dbReference type="HOGENOM" id="CLU_069765_3_1_9"/>
<dbReference type="UniPathway" id="UPA00253">
    <property type="reaction ID" value="UER00332"/>
</dbReference>
<dbReference type="GO" id="GO:0005524">
    <property type="term" value="F:ATP binding"/>
    <property type="evidence" value="ECO:0007669"/>
    <property type="project" value="UniProtKB-KW"/>
</dbReference>
<dbReference type="GO" id="GO:0004515">
    <property type="term" value="F:nicotinate-nucleotide adenylyltransferase activity"/>
    <property type="evidence" value="ECO:0007669"/>
    <property type="project" value="UniProtKB-UniRule"/>
</dbReference>
<dbReference type="GO" id="GO:0009435">
    <property type="term" value="P:NAD biosynthetic process"/>
    <property type="evidence" value="ECO:0007669"/>
    <property type="project" value="UniProtKB-UniRule"/>
</dbReference>
<dbReference type="CDD" id="cd02165">
    <property type="entry name" value="NMNAT"/>
    <property type="match status" value="1"/>
</dbReference>
<dbReference type="FunFam" id="3.40.50.620:FF:000079">
    <property type="entry name" value="Probable nicotinate-nucleotide adenylyltransferase"/>
    <property type="match status" value="1"/>
</dbReference>
<dbReference type="Gene3D" id="3.40.50.620">
    <property type="entry name" value="HUPs"/>
    <property type="match status" value="1"/>
</dbReference>
<dbReference type="HAMAP" id="MF_00244">
    <property type="entry name" value="NaMN_adenylyltr"/>
    <property type="match status" value="1"/>
</dbReference>
<dbReference type="InterPro" id="IPR004821">
    <property type="entry name" value="Cyt_trans-like"/>
</dbReference>
<dbReference type="InterPro" id="IPR005248">
    <property type="entry name" value="NadD/NMNAT"/>
</dbReference>
<dbReference type="InterPro" id="IPR014729">
    <property type="entry name" value="Rossmann-like_a/b/a_fold"/>
</dbReference>
<dbReference type="NCBIfam" id="TIGR00125">
    <property type="entry name" value="cyt_tran_rel"/>
    <property type="match status" value="1"/>
</dbReference>
<dbReference type="NCBIfam" id="TIGR00482">
    <property type="entry name" value="nicotinate (nicotinamide) nucleotide adenylyltransferase"/>
    <property type="match status" value="1"/>
</dbReference>
<dbReference type="NCBIfam" id="NF000840">
    <property type="entry name" value="PRK00071.1-3"/>
    <property type="match status" value="1"/>
</dbReference>
<dbReference type="NCBIfam" id="NF000841">
    <property type="entry name" value="PRK00071.1-4"/>
    <property type="match status" value="1"/>
</dbReference>
<dbReference type="PANTHER" id="PTHR39321">
    <property type="entry name" value="NICOTINATE-NUCLEOTIDE ADENYLYLTRANSFERASE-RELATED"/>
    <property type="match status" value="1"/>
</dbReference>
<dbReference type="PANTHER" id="PTHR39321:SF3">
    <property type="entry name" value="PHOSPHOPANTETHEINE ADENYLYLTRANSFERASE"/>
    <property type="match status" value="1"/>
</dbReference>
<dbReference type="Pfam" id="PF01467">
    <property type="entry name" value="CTP_transf_like"/>
    <property type="match status" value="1"/>
</dbReference>
<dbReference type="SUPFAM" id="SSF52374">
    <property type="entry name" value="Nucleotidylyl transferase"/>
    <property type="match status" value="1"/>
</dbReference>
<accession>Q8P2L2</accession>
<gene>
    <name evidence="1" type="primary">nadD</name>
    <name type="ordered locus">spyM18_0304</name>
</gene>
<protein>
    <recommendedName>
        <fullName evidence="1">Probable nicotinate-nucleotide adenylyltransferase</fullName>
        <ecNumber evidence="1">2.7.7.18</ecNumber>
    </recommendedName>
    <alternativeName>
        <fullName evidence="1">Deamido-NAD(+) diphosphorylase</fullName>
    </alternativeName>
    <alternativeName>
        <fullName evidence="1">Deamido-NAD(+) pyrophosphorylase</fullName>
    </alternativeName>
    <alternativeName>
        <fullName evidence="1">Nicotinate mononucleotide adenylyltransferase</fullName>
        <shortName evidence="1">NaMN adenylyltransferase</shortName>
    </alternativeName>
</protein>
<sequence length="210" mass="24322">MALELLTPFTKVELEEEKKESNRKQIGILGGNFNPIHNAHLVVADQVRQQLGLDQVLLMPECKPPHVDAKETIDEKHRLCMLELAIEDVEGLAIETCELERQGISYTYDTMIYLTEQHPDVDYYFIIGADMVDYLPKWHRIDELVKLVQFVGVQRPKYKAGTSYPVIWVDLPLMDISSSMIRDFIKKGRQPNYLLPKQVLDYITQEGLYQ</sequence>
<evidence type="ECO:0000255" key="1">
    <source>
        <dbReference type="HAMAP-Rule" id="MF_00244"/>
    </source>
</evidence>
<proteinExistence type="inferred from homology"/>
<reference key="1">
    <citation type="journal article" date="2002" name="Proc. Natl. Acad. Sci. U.S.A.">
        <title>Genome sequence and comparative microarray analysis of serotype M18 group A Streptococcus strains associated with acute rheumatic fever outbreaks.</title>
        <authorList>
            <person name="Smoot J.C."/>
            <person name="Barbian K.D."/>
            <person name="Van Gompel J.J."/>
            <person name="Smoot L.M."/>
            <person name="Chaussee M.S."/>
            <person name="Sylva G.L."/>
            <person name="Sturdevant D.E."/>
            <person name="Ricklefs S.M."/>
            <person name="Porcella S.F."/>
            <person name="Parkins L.D."/>
            <person name="Beres S.B."/>
            <person name="Campbell D.S."/>
            <person name="Smith T.M."/>
            <person name="Zhang Q."/>
            <person name="Kapur V."/>
            <person name="Daly J.A."/>
            <person name="Veasy L.G."/>
            <person name="Musser J.M."/>
        </authorList>
    </citation>
    <scope>NUCLEOTIDE SEQUENCE [LARGE SCALE GENOMIC DNA]</scope>
    <source>
        <strain>MGAS8232</strain>
    </source>
</reference>
<comment type="function">
    <text evidence="1">Catalyzes the reversible adenylation of nicotinate mononucleotide (NaMN) to nicotinic acid adenine dinucleotide (NaAD).</text>
</comment>
<comment type="catalytic activity">
    <reaction evidence="1">
        <text>nicotinate beta-D-ribonucleotide + ATP + H(+) = deamido-NAD(+) + diphosphate</text>
        <dbReference type="Rhea" id="RHEA:22860"/>
        <dbReference type="ChEBI" id="CHEBI:15378"/>
        <dbReference type="ChEBI" id="CHEBI:30616"/>
        <dbReference type="ChEBI" id="CHEBI:33019"/>
        <dbReference type="ChEBI" id="CHEBI:57502"/>
        <dbReference type="ChEBI" id="CHEBI:58437"/>
        <dbReference type="EC" id="2.7.7.18"/>
    </reaction>
</comment>
<comment type="pathway">
    <text evidence="1">Cofactor biosynthesis; NAD(+) biosynthesis; deamido-NAD(+) from nicotinate D-ribonucleotide: step 1/1.</text>
</comment>
<comment type="similarity">
    <text evidence="1">Belongs to the NadD family.</text>
</comment>
<feature type="chain" id="PRO_0000181458" description="Probable nicotinate-nucleotide adenylyltransferase">
    <location>
        <begin position="1"/>
        <end position="210"/>
    </location>
</feature>